<protein>
    <recommendedName>
        <fullName evidence="16">Interleukin-6</fullName>
        <shortName>IL-6</shortName>
    </recommendedName>
    <alternativeName>
        <fullName>B-cell hybridoma growth factor</fullName>
    </alternativeName>
    <alternativeName>
        <fullName>Interleukin HP-1</fullName>
    </alternativeName>
</protein>
<feature type="signal peptide" evidence="12 13">
    <location>
        <begin position="1"/>
        <end position="24"/>
    </location>
</feature>
<feature type="chain" id="PRO_0000015588" description="Interleukin-6">
    <location>
        <begin position="25"/>
        <end position="211"/>
    </location>
</feature>
<feature type="disulfide bond" evidence="14">
    <location>
        <begin position="70"/>
        <end position="76"/>
    </location>
</feature>
<feature type="disulfide bond" evidence="14">
    <location>
        <begin position="99"/>
        <end position="109"/>
    </location>
</feature>
<feature type="helix" evidence="19">
    <location>
        <begin position="48"/>
        <end position="68"/>
    </location>
</feature>
<feature type="turn" evidence="19">
    <location>
        <begin position="69"/>
        <end position="72"/>
    </location>
</feature>
<feature type="helix" evidence="19">
    <location>
        <begin position="74"/>
        <end position="77"/>
    </location>
</feature>
<feature type="turn" evidence="19">
    <location>
        <begin position="81"/>
        <end position="83"/>
    </location>
</feature>
<feature type="helix" evidence="19">
    <location>
        <begin position="84"/>
        <end position="86"/>
    </location>
</feature>
<feature type="strand" evidence="19">
    <location>
        <begin position="101"/>
        <end position="103"/>
    </location>
</feature>
<feature type="helix" evidence="19">
    <location>
        <begin position="114"/>
        <end position="129"/>
    </location>
</feature>
<feature type="helix" evidence="19">
    <location>
        <begin position="133"/>
        <end position="160"/>
    </location>
</feature>
<feature type="helix" evidence="19">
    <location>
        <begin position="170"/>
        <end position="176"/>
    </location>
</feature>
<feature type="helix" evidence="19">
    <location>
        <begin position="186"/>
        <end position="209"/>
    </location>
</feature>
<comment type="function">
    <text evidence="9 15 17">Cytokine with a wide variety of biological functions in immunity, tissue regeneration, and metabolism (Probable). Binds to IL6R, then the complex associates to the signaling subunit IL6ST/gp130 to trigger the intracellular IL6-signaling pathway (PubMed:8910279). The interaction with the membrane-bound IL6R and IL6ST stimulates 'classic signaling', whereas the binding of IL6 and soluble IL6R to IL6ST stimulates 'trans-signaling'. Alternatively, 'cluster signaling' occurs when membrane-bound IL6:IL6R complexes on transmitter cells activate IL6ST receptors on neighboring receiver cells (PubMed:27893700).</text>
</comment>
<comment type="function">
    <text evidence="5 8 9 17">IL6 is a potent inducer of the acute phase response. Rapid production of IL6 contributes to host defense during infection and tissue injury, but excessive IL6 synthesis is involved in disease pathology. In the innate immune response, is synthesized by myeloid cells, such as macrophages and dendritic cells, upon recognition of pathogens through toll-like receptors (TLRs) at the site of infection or tissue injury. In the adaptive immune response, is required for the differentiation of B-cells into immunoglolin-secreting cells (Probable). Plays a major role in the differentiation of CD4(+) T cell subsets. Essential factor for the development of T follicular helper (Tfh) cells that are required for the induction of germinal-center formation. Together with IL21, controls the early generation of Tfh cells and are critical for an effective antibody response to acute viral infection (PubMed:23045607). Required to drive naive CD4(+) T cells to the Th17 lineage, through 'cluster signaling' by dendritic cells (PubMed:16990136, PubMed:27893700). Also required for proliferation of myeloma cells and the survival of plasmablast cells (Probable).</text>
</comment>
<comment type="function">
    <text evidence="1 2 3 4 6 11 15">Acts as an essential factor in bone homeostasis and on vessels directly or indirectly by induction of VEGF, resulting in increased angiogenesis activity and vascular permeability. Induces, through 'trans-signaling' and synergistically with IL1B and TNF, the production of VEGF (PubMed:17075861). Involved in metabolic controls, is discharged into the bloodstream after muscle contraction increasing lipolysis and improving insulin resistance (PubMed:11786910). 'Trans-signaling' in central nervous system regulates energy and glucose homeostasis (PubMed:28402851). Mediates, through GLP-1, crosstalk between insulin-sensitive tissues, intestinal L cells and pancreatic islets to adapt to changes in insulin demand (PubMed:11113088). Also acts as a myokine (By similarity). Plays a protective role during liver injury, being required for maintenance of tissue regeneration (PubMed:11113088, PubMed:8910279). Also has a pivotal role in iron metabolism by regulating HAMP/hepcidin expression upon inflammation or bacterial infection (PubMed:15124018). Through activation of IL6ST-YAP-NOTCH pathway, induces inflammation-induced epithelial regeneration (By similarity).</text>
</comment>
<comment type="subunit">
    <text evidence="10">Component of a hexamer of two molecules each of IL6, IL6R and IL6ST; first binds to IL6R to associate with the signaling subunit IL6ST (PubMed:28265003). Interacts with IL6R (via the N-terminal ectodomain); this interaction may be affected by IL6R-binding with SORL1, hence decreasing IL6 cis signaling. Interacts with SORL1 (via the N-terminal ectodomain); this interaction leads to IL6 internalization and lysosomal degradation. May form a trimeric complex with the soluble SORL1 ectodomain and soluble IL6R receptor; this interaction might stabilize circulating IL6, hence promoting IL6 trans signaling (PubMed:28265003).</text>
</comment>
<comment type="subcellular location">
    <subcellularLocation>
        <location evidence="9">Secreted</location>
    </subcellularLocation>
</comment>
<comment type="tissue specificity">
    <text evidence="8 9 11">Expressed by dendritic cells and macrophages (PubMed:23045607, PubMed:27893700). Expressed by activated follicular B cells (PubMed:23045607). Abundantly expressed in the central nervous system (CNS), particularly the hypothalamic region (PubMed:28402851).</text>
</comment>
<comment type="induction">
    <text evidence="7 8">In activated follicular B cells, expression is induced early after influenza virus infection (PubMed:23045607). Plasma levels are highly increased upon exercise, due to enhanced production by contracting skeletal muscles (PubMed:22037645).</text>
</comment>
<comment type="PTM">
    <text evidence="1">N- and O-glycosylated.</text>
</comment>
<comment type="disruption phenotype">
    <text evidence="3 5 8 15">Animals have normal T-cell numbers in the lamina propria but the T(H)17 cells are reduced by about 10-fold (PubMed:16990136). They develop mature-onset obesity and have disturbed carbohydrate and lipid metabolism, increased leptin levels and decreased responsiveness to leptin treatment (PubMed:11786910). Animals have impaired liver regeneration characterized by liver necrosis and failure (PubMed:8910279). Mutants infected with influenza virus do not show a significant difference on germinal center B cells compared to wild-types (PubMed:23045607). Double knockouts for IL21 and IL6 infected with influenza virus show a significant reduction in germinal centers in both the draining lymphatic nodes and the spleens to wild-types. Animals show a significant reduction in virus-specific IgM and IgG (PubMed:23045607).</text>
</comment>
<comment type="similarity">
    <text evidence="16">Belongs to the IL-6 superfamily.</text>
</comment>
<name>IL6_MOUSE</name>
<sequence length="211" mass="24384">MKFLSARDFHPVAFLGLMLVTTTAFPTSQVRRGDFTEDTTPNRPVYTTSQVGGLITHVLWEIVEMRKELCNGNSDCMNNDDALAENNLKLPEIQRNDGCYQTGYNQEICLLKISSGLLEYHSYLEYMKNNLKDNKKDKARVLQRDTETLIHIFNQEVKDLHKIVLPTPISNALLTDKLESQKEWLRTKTIQFILKSLEEFLKVTLRSTRQT</sequence>
<proteinExistence type="evidence at protein level"/>
<keyword id="KW-0002">3D-structure</keyword>
<keyword id="KW-0011">Acute phase</keyword>
<keyword id="KW-0202">Cytokine</keyword>
<keyword id="KW-0903">Direct protein sequencing</keyword>
<keyword id="KW-1015">Disulfide bond</keyword>
<keyword id="KW-0339">Growth factor</keyword>
<keyword id="KW-1185">Reference proteome</keyword>
<keyword id="KW-0964">Secreted</keyword>
<keyword id="KW-0732">Signal</keyword>
<dbReference type="EMBL" id="X06203">
    <property type="protein sequence ID" value="CAA29560.1"/>
    <property type="molecule type" value="mRNA"/>
</dbReference>
<dbReference type="EMBL" id="M20572">
    <property type="protein sequence ID" value="AAA39302.1"/>
    <property type="molecule type" value="Genomic_DNA"/>
</dbReference>
<dbReference type="EMBL" id="J03783">
    <property type="protein sequence ID" value="AAA39301.1"/>
    <property type="molecule type" value="mRNA"/>
</dbReference>
<dbReference type="EMBL" id="X54542">
    <property type="protein sequence ID" value="CAA38411.1"/>
    <property type="molecule type" value="mRNA"/>
</dbReference>
<dbReference type="EMBL" id="AK150440">
    <property type="protein sequence ID" value="BAE29562.1"/>
    <property type="molecule type" value="mRNA"/>
</dbReference>
<dbReference type="EMBL" id="X51457">
    <property type="protein sequence ID" value="CAA35824.1"/>
    <property type="molecule type" value="Genomic_DNA"/>
</dbReference>
<dbReference type="EMBL" id="M24221">
    <property type="protein sequence ID" value="AAA68814.1"/>
    <property type="molecule type" value="Genomic_DNA"/>
</dbReference>
<dbReference type="CCDS" id="CCDS19153.1"/>
<dbReference type="PIR" id="A30531">
    <property type="entry name" value="ICMS6"/>
</dbReference>
<dbReference type="RefSeq" id="NP_001300983.1">
    <property type="nucleotide sequence ID" value="NM_001314054.1"/>
</dbReference>
<dbReference type="RefSeq" id="NP_112445.1">
    <property type="nucleotide sequence ID" value="NM_031168.2"/>
</dbReference>
<dbReference type="PDB" id="2L3Y">
    <property type="method" value="NMR"/>
    <property type="chains" value="A=27-211"/>
</dbReference>
<dbReference type="PDBsum" id="2L3Y"/>
<dbReference type="SMR" id="P08505"/>
<dbReference type="BioGRID" id="200641">
    <property type="interactions" value="3"/>
</dbReference>
<dbReference type="FunCoup" id="P08505">
    <property type="interactions" value="893"/>
</dbReference>
<dbReference type="IntAct" id="P08505">
    <property type="interactions" value="1"/>
</dbReference>
<dbReference type="STRING" id="10090.ENSMUSP00000026845"/>
<dbReference type="GlyGen" id="P08505">
    <property type="glycosylation" value="1 site"/>
</dbReference>
<dbReference type="PhosphoSitePlus" id="P08505"/>
<dbReference type="PaxDb" id="10090-ENSMUSP00000026845"/>
<dbReference type="ProteomicsDB" id="267327"/>
<dbReference type="Antibodypedia" id="12025">
    <property type="antibodies" value="3224 antibodies from 54 providers"/>
</dbReference>
<dbReference type="DNASU" id="16193"/>
<dbReference type="Ensembl" id="ENSMUST00000026845.12">
    <property type="protein sequence ID" value="ENSMUSP00000026845.8"/>
    <property type="gene ID" value="ENSMUSG00000025746.12"/>
</dbReference>
<dbReference type="GeneID" id="16193"/>
<dbReference type="KEGG" id="mmu:16193"/>
<dbReference type="UCSC" id="uc008wuu.1">
    <property type="organism name" value="mouse"/>
</dbReference>
<dbReference type="AGR" id="MGI:96559"/>
<dbReference type="CTD" id="3569"/>
<dbReference type="MGI" id="MGI:96559">
    <property type="gene designation" value="Il6"/>
</dbReference>
<dbReference type="VEuPathDB" id="HostDB:ENSMUSG00000025746"/>
<dbReference type="eggNOG" id="ENOG502S7Q4">
    <property type="taxonomic scope" value="Eukaryota"/>
</dbReference>
<dbReference type="GeneTree" id="ENSGT00390000000878"/>
<dbReference type="HOGENOM" id="CLU_096521_0_0_1"/>
<dbReference type="InParanoid" id="P08505"/>
<dbReference type="OMA" id="FSKCENS"/>
<dbReference type="OrthoDB" id="8943569at2759"/>
<dbReference type="PhylomeDB" id="P08505"/>
<dbReference type="TreeFam" id="TF335984"/>
<dbReference type="Reactome" id="R-MMU-1059683">
    <property type="pathway name" value="Interleukin-6 signaling"/>
</dbReference>
<dbReference type="Reactome" id="R-MMU-110056">
    <property type="pathway name" value="MAPK3 (ERK1) activation"/>
</dbReference>
<dbReference type="Reactome" id="R-MMU-112411">
    <property type="pathway name" value="MAPK1 (ERK2) activation"/>
</dbReference>
<dbReference type="Reactome" id="R-MMU-381426">
    <property type="pathway name" value="Regulation of Insulin-like Growth Factor (IGF) transport and uptake by Insulin-like Growth Factor Binding Proteins (IGFBPs)"/>
</dbReference>
<dbReference type="Reactome" id="R-MMU-8957275">
    <property type="pathway name" value="Post-translational protein phosphorylation"/>
</dbReference>
<dbReference type="BioGRID-ORCS" id="16193">
    <property type="hits" value="3 hits in 78 CRISPR screens"/>
</dbReference>
<dbReference type="EvolutionaryTrace" id="P08505"/>
<dbReference type="PRO" id="PR:P08505"/>
<dbReference type="Proteomes" id="UP000000589">
    <property type="component" value="Chromosome 5"/>
</dbReference>
<dbReference type="RNAct" id="P08505">
    <property type="molecule type" value="protein"/>
</dbReference>
<dbReference type="Bgee" id="ENSMUSG00000025746">
    <property type="expression patterns" value="Expressed in mesodermal cell in embryo and 25 other cell types or tissues"/>
</dbReference>
<dbReference type="ExpressionAtlas" id="P08505">
    <property type="expression patterns" value="baseline and differential"/>
</dbReference>
<dbReference type="GO" id="GO:0009897">
    <property type="term" value="C:external side of plasma membrane"/>
    <property type="evidence" value="ECO:0000314"/>
    <property type="project" value="MGI"/>
</dbReference>
<dbReference type="GO" id="GO:0005615">
    <property type="term" value="C:extracellular space"/>
    <property type="evidence" value="ECO:0000314"/>
    <property type="project" value="MGI"/>
</dbReference>
<dbReference type="GO" id="GO:0005896">
    <property type="term" value="C:interleukin-6 receptor complex"/>
    <property type="evidence" value="ECO:0000314"/>
    <property type="project" value="UniProtKB"/>
</dbReference>
<dbReference type="GO" id="GO:0005125">
    <property type="term" value="F:cytokine activity"/>
    <property type="evidence" value="ECO:0000314"/>
    <property type="project" value="BHF-UCL"/>
</dbReference>
<dbReference type="GO" id="GO:0008083">
    <property type="term" value="F:growth factor activity"/>
    <property type="evidence" value="ECO:0007669"/>
    <property type="project" value="UniProtKB-KW"/>
</dbReference>
<dbReference type="GO" id="GO:0005138">
    <property type="term" value="F:interleukin-6 receptor binding"/>
    <property type="evidence" value="ECO:0000314"/>
    <property type="project" value="MGI"/>
</dbReference>
<dbReference type="GO" id="GO:0006953">
    <property type="term" value="P:acute-phase response"/>
    <property type="evidence" value="ECO:0007669"/>
    <property type="project" value="UniProtKB-KW"/>
</dbReference>
<dbReference type="GO" id="GO:0060445">
    <property type="term" value="P:branching involved in salivary gland morphogenesis"/>
    <property type="evidence" value="ECO:0000314"/>
    <property type="project" value="MGI"/>
</dbReference>
<dbReference type="GO" id="GO:0035729">
    <property type="term" value="P:cellular response to hepatocyte growth factor stimulus"/>
    <property type="evidence" value="ECO:0000314"/>
    <property type="project" value="MGI"/>
</dbReference>
<dbReference type="GO" id="GO:0071347">
    <property type="term" value="P:cellular response to interleukin-1"/>
    <property type="evidence" value="ECO:0000314"/>
    <property type="project" value="MGI"/>
</dbReference>
<dbReference type="GO" id="GO:0097398">
    <property type="term" value="P:cellular response to interleukin-17"/>
    <property type="evidence" value="ECO:0000314"/>
    <property type="project" value="MGI"/>
</dbReference>
<dbReference type="GO" id="GO:0071222">
    <property type="term" value="P:cellular response to lipopolysaccharide"/>
    <property type="evidence" value="ECO:0000314"/>
    <property type="project" value="MGI"/>
</dbReference>
<dbReference type="GO" id="GO:0071356">
    <property type="term" value="P:cellular response to tumor necrosis factor"/>
    <property type="evidence" value="ECO:0000314"/>
    <property type="project" value="MGI"/>
</dbReference>
<dbReference type="GO" id="GO:0098586">
    <property type="term" value="P:cellular response to virus"/>
    <property type="evidence" value="ECO:0000315"/>
    <property type="project" value="UniProtKB"/>
</dbReference>
<dbReference type="GO" id="GO:0042832">
    <property type="term" value="P:defense response to protozoan"/>
    <property type="evidence" value="ECO:0000315"/>
    <property type="project" value="MGI"/>
</dbReference>
<dbReference type="GO" id="GO:0031018">
    <property type="term" value="P:endocrine pancreas development"/>
    <property type="evidence" value="ECO:0000315"/>
    <property type="project" value="BHF-UCL"/>
</dbReference>
<dbReference type="GO" id="GO:0060664">
    <property type="term" value="P:epithelial cell proliferation involved in salivary gland morphogenesis"/>
    <property type="evidence" value="ECO:0000314"/>
    <property type="project" value="MGI"/>
</dbReference>
<dbReference type="GO" id="GO:0010467">
    <property type="term" value="P:gene expression"/>
    <property type="evidence" value="ECO:0000314"/>
    <property type="project" value="MGI"/>
</dbReference>
<dbReference type="GO" id="GO:0002314">
    <property type="term" value="P:germinal center B cell differentiation"/>
    <property type="evidence" value="ECO:0000315"/>
    <property type="project" value="UniProtKB"/>
</dbReference>
<dbReference type="GO" id="GO:0070091">
    <property type="term" value="P:glucagon secretion"/>
    <property type="evidence" value="ECO:0000315"/>
    <property type="project" value="BHF-UCL"/>
</dbReference>
<dbReference type="GO" id="GO:0042593">
    <property type="term" value="P:glucose homeostasis"/>
    <property type="evidence" value="ECO:0000314"/>
    <property type="project" value="UniProtKB"/>
</dbReference>
<dbReference type="GO" id="GO:0072574">
    <property type="term" value="P:hepatocyte proliferation"/>
    <property type="evidence" value="ECO:0000315"/>
    <property type="project" value="UniProtKB"/>
</dbReference>
<dbReference type="GO" id="GO:0090594">
    <property type="term" value="P:inflammatory response to wounding"/>
    <property type="evidence" value="ECO:0000314"/>
    <property type="project" value="UniProt"/>
</dbReference>
<dbReference type="GO" id="GO:0070102">
    <property type="term" value="P:interleukin-6-mediated signaling pathway"/>
    <property type="evidence" value="ECO:0000314"/>
    <property type="project" value="UniProtKB"/>
</dbReference>
<dbReference type="GO" id="GO:0097421">
    <property type="term" value="P:liver regeneration"/>
    <property type="evidence" value="ECO:0000315"/>
    <property type="project" value="UniProtKB"/>
</dbReference>
<dbReference type="GO" id="GO:0046716">
    <property type="term" value="P:muscle cell cellular homeostasis"/>
    <property type="evidence" value="ECO:0000316"/>
    <property type="project" value="MGI"/>
</dbReference>
<dbReference type="GO" id="GO:0002262">
    <property type="term" value="P:myeloid cell homeostasis"/>
    <property type="evidence" value="ECO:0000315"/>
    <property type="project" value="MGI"/>
</dbReference>
<dbReference type="GO" id="GO:0045779">
    <property type="term" value="P:negative regulation of bone resorption"/>
    <property type="evidence" value="ECO:0000315"/>
    <property type="project" value="BHF-UCL"/>
</dbReference>
<dbReference type="GO" id="GO:0032682">
    <property type="term" value="P:negative regulation of chemokine production"/>
    <property type="evidence" value="ECO:0000314"/>
    <property type="project" value="MGI"/>
</dbReference>
<dbReference type="GO" id="GO:0046888">
    <property type="term" value="P:negative regulation of hormone secretion"/>
    <property type="evidence" value="ECO:0000314"/>
    <property type="project" value="MGI"/>
</dbReference>
<dbReference type="GO" id="GO:2000660">
    <property type="term" value="P:negative regulation of interleukin-1-mediated signaling pathway"/>
    <property type="evidence" value="ECO:0000315"/>
    <property type="project" value="BHF-UCL"/>
</dbReference>
<dbReference type="GO" id="GO:0001781">
    <property type="term" value="P:neutrophil apoptotic process"/>
    <property type="evidence" value="ECO:0000314"/>
    <property type="project" value="MGI"/>
</dbReference>
<dbReference type="GO" id="GO:0071864">
    <property type="term" value="P:positive regulation of cell proliferation in bone marrow"/>
    <property type="evidence" value="ECO:0000316"/>
    <property type="project" value="MGI"/>
</dbReference>
<dbReference type="GO" id="GO:0045893">
    <property type="term" value="P:positive regulation of DNA-templated transcription"/>
    <property type="evidence" value="ECO:0000314"/>
    <property type="project" value="MGI"/>
</dbReference>
<dbReference type="GO" id="GO:0050679">
    <property type="term" value="P:positive regulation of epithelial cell proliferation"/>
    <property type="evidence" value="ECO:0000314"/>
    <property type="project" value="MGI"/>
</dbReference>
<dbReference type="GO" id="GO:0010628">
    <property type="term" value="P:positive regulation of gene expression"/>
    <property type="evidence" value="ECO:0000316"/>
    <property type="project" value="MGI"/>
</dbReference>
<dbReference type="GO" id="GO:0014015">
    <property type="term" value="P:positive regulation of gliogenesis"/>
    <property type="evidence" value="ECO:0000315"/>
    <property type="project" value="ARUK-UCL"/>
</dbReference>
<dbReference type="GO" id="GO:0002639">
    <property type="term" value="P:positive regulation of immunoglobulin production"/>
    <property type="evidence" value="ECO:0000315"/>
    <property type="project" value="UniProtKB"/>
</dbReference>
<dbReference type="GO" id="GO:0032740">
    <property type="term" value="P:positive regulation of interleukin-17 production"/>
    <property type="evidence" value="ECO:0000314"/>
    <property type="project" value="ARUK-UCL"/>
</dbReference>
<dbReference type="GO" id="GO:0032745">
    <property type="term" value="P:positive regulation of interleukin-21 production"/>
    <property type="evidence" value="ECO:0000314"/>
    <property type="project" value="UniProtKB"/>
</dbReference>
<dbReference type="GO" id="GO:0043410">
    <property type="term" value="P:positive regulation of MAPK cascade"/>
    <property type="evidence" value="ECO:0000266"/>
    <property type="project" value="MGI"/>
</dbReference>
<dbReference type="GO" id="GO:1904894">
    <property type="term" value="P:positive regulation of receptor signaling pathway via STAT"/>
    <property type="evidence" value="ECO:0000315"/>
    <property type="project" value="UniProtKB"/>
</dbReference>
<dbReference type="GO" id="GO:2000553">
    <property type="term" value="P:positive regulation of T-helper 2 cell cytokine production"/>
    <property type="evidence" value="ECO:0000315"/>
    <property type="project" value="BHF-UCL"/>
</dbReference>
<dbReference type="GO" id="GO:0045630">
    <property type="term" value="P:positive regulation of T-helper 2 cell differentiation"/>
    <property type="evidence" value="ECO:0000314"/>
    <property type="project" value="MGI"/>
</dbReference>
<dbReference type="GO" id="GO:0045944">
    <property type="term" value="P:positive regulation of transcription by RNA polymerase II"/>
    <property type="evidence" value="ECO:0000314"/>
    <property type="project" value="BHF-UCL"/>
</dbReference>
<dbReference type="GO" id="GO:0042981">
    <property type="term" value="P:regulation of apoptotic process"/>
    <property type="evidence" value="ECO:0000315"/>
    <property type="project" value="MGI"/>
</dbReference>
<dbReference type="GO" id="GO:0042127">
    <property type="term" value="P:regulation of cell population proliferation"/>
    <property type="evidence" value="ECO:0000316"/>
    <property type="project" value="MGI"/>
</dbReference>
<dbReference type="GO" id="GO:0070092">
    <property type="term" value="P:regulation of glucagon secretion"/>
    <property type="evidence" value="ECO:0000314"/>
    <property type="project" value="UniProtKB"/>
</dbReference>
<dbReference type="GO" id="GO:0050796">
    <property type="term" value="P:regulation of insulin secretion"/>
    <property type="evidence" value="ECO:0000314"/>
    <property type="project" value="UniProtKB"/>
</dbReference>
<dbReference type="GO" id="GO:0014823">
    <property type="term" value="P:response to activity"/>
    <property type="evidence" value="ECO:0000314"/>
    <property type="project" value="UniProtKB"/>
</dbReference>
<dbReference type="GO" id="GO:0009611">
    <property type="term" value="P:response to wounding"/>
    <property type="evidence" value="ECO:0000314"/>
    <property type="project" value="MGI"/>
</dbReference>
<dbReference type="GO" id="GO:0042110">
    <property type="term" value="P:T cell activation"/>
    <property type="evidence" value="ECO:0000316"/>
    <property type="project" value="MGI"/>
</dbReference>
<dbReference type="GO" id="GO:0061470">
    <property type="term" value="P:T follicular helper cell differentiation"/>
    <property type="evidence" value="ECO:0000315"/>
    <property type="project" value="UniProtKB"/>
</dbReference>
<dbReference type="GO" id="GO:0072540">
    <property type="term" value="P:T-helper 17 cell lineage commitment"/>
    <property type="evidence" value="ECO:0000314"/>
    <property type="project" value="UniProtKB"/>
</dbReference>
<dbReference type="GO" id="GO:0045064">
    <property type="term" value="P:T-helper 2 cell differentiation"/>
    <property type="evidence" value="ECO:0000314"/>
    <property type="project" value="MGI"/>
</dbReference>
<dbReference type="GO" id="GO:0010573">
    <property type="term" value="P:vascular endothelial growth factor production"/>
    <property type="evidence" value="ECO:0000250"/>
    <property type="project" value="UniProtKB"/>
</dbReference>
<dbReference type="FunFam" id="1.20.1250.10:FF:000006">
    <property type="entry name" value="Interleukin-6"/>
    <property type="match status" value="1"/>
</dbReference>
<dbReference type="Gene3D" id="1.20.1250.10">
    <property type="match status" value="1"/>
</dbReference>
<dbReference type="InterPro" id="IPR009079">
    <property type="entry name" value="4_helix_cytokine-like_core"/>
</dbReference>
<dbReference type="InterPro" id="IPR003574">
    <property type="entry name" value="IL-6-like"/>
</dbReference>
<dbReference type="InterPro" id="IPR030474">
    <property type="entry name" value="IL-6/GCSF/MGF"/>
</dbReference>
<dbReference type="InterPro" id="IPR030473">
    <property type="entry name" value="IL6/GCSF/MGF_CS"/>
</dbReference>
<dbReference type="PANTHER" id="PTHR48494">
    <property type="entry name" value="INTERLEUKIN-6"/>
    <property type="match status" value="1"/>
</dbReference>
<dbReference type="PANTHER" id="PTHR48494:SF1">
    <property type="entry name" value="INTERLEUKIN-6"/>
    <property type="match status" value="1"/>
</dbReference>
<dbReference type="Pfam" id="PF00489">
    <property type="entry name" value="IL6"/>
    <property type="match status" value="1"/>
</dbReference>
<dbReference type="PIRSF" id="PIRSF001935">
    <property type="entry name" value="IL6_MGF_GCSF"/>
    <property type="match status" value="1"/>
</dbReference>
<dbReference type="PRINTS" id="PR00433">
    <property type="entry name" value="IL6GCSFMGF"/>
</dbReference>
<dbReference type="PRINTS" id="PR00434">
    <property type="entry name" value="INTERLEUKIN6"/>
</dbReference>
<dbReference type="SMART" id="SM00126">
    <property type="entry name" value="IL6"/>
    <property type="match status" value="1"/>
</dbReference>
<dbReference type="SUPFAM" id="SSF47266">
    <property type="entry name" value="4-helical cytokines"/>
    <property type="match status" value="1"/>
</dbReference>
<dbReference type="PROSITE" id="PS00254">
    <property type="entry name" value="INTERLEUKIN_6"/>
    <property type="match status" value="1"/>
</dbReference>
<accession>P08505</accession>
<accession>Q3UCQ0</accession>
<accession>Q8BN26</accession>
<reference key="1">
    <citation type="journal article" date="1988" name="Eur. J. Immunol.">
        <title>cDNA cloning of murine interleukin-HP1: homology with human interleukin 6.</title>
        <authorList>
            <person name="van Snick J."/>
            <person name="Cayphas S."/>
            <person name="Szikora J.-P."/>
            <person name="Renauld J.-C."/>
            <person name="van Roost E."/>
            <person name="Boon T."/>
            <person name="Simpson R.J."/>
        </authorList>
    </citation>
    <scope>NUCLEOTIDE SEQUENCE [MRNA]</scope>
    <scope>PARTIAL PROTEIN SEQUENCE</scope>
</reference>
<reference key="2">
    <citation type="journal article" date="1988" name="J. Immunol.">
        <title>Genomic structure of the murine IL-6 gene. High degree conservation of potential regulatory sequences between mouse and human.</title>
        <authorList>
            <person name="Tanabe O."/>
            <person name="Akira S."/>
            <person name="Kamiya T."/>
            <person name="Wong G.G."/>
            <person name="Hirano T."/>
            <person name="Kishimoto T."/>
        </authorList>
    </citation>
    <scope>NUCLEOTIDE SEQUENCE [GENOMIC DNA]</scope>
</reference>
<reference key="3">
    <citation type="journal article" date="1988" name="Proc. Natl. Acad. Sci. U.S.A.">
        <title>Multiple biological activities are expressed by a mouse interleukin 6 cDNA clone isolated from bone marrow stromal cells.</title>
        <authorList>
            <person name="Chiu C.P."/>
            <person name="Moulds C."/>
            <person name="Coffman R.L."/>
            <person name="Rennick D."/>
            <person name="Lee F."/>
        </authorList>
    </citation>
    <scope>NUCLEOTIDE SEQUENCE [MRNA]</scope>
</reference>
<reference key="4">
    <citation type="journal article" date="1990" name="Nucleic Acids Res.">
        <title>Cloning and sequence analysis of the cDNA for murine interleukin-6.</title>
        <authorList>
            <person name="Grenett H.E."/>
            <person name="Fuentes N.L."/>
            <person name="Fuller G.M."/>
        </authorList>
    </citation>
    <scope>NUCLEOTIDE SEQUENCE [MRNA]</scope>
    <source>
        <strain>BALB/cJ</strain>
    </source>
</reference>
<reference key="5">
    <citation type="journal article" date="2005" name="Science">
        <title>The transcriptional landscape of the mammalian genome.</title>
        <authorList>
            <person name="Carninci P."/>
            <person name="Kasukawa T."/>
            <person name="Katayama S."/>
            <person name="Gough J."/>
            <person name="Frith M.C."/>
            <person name="Maeda N."/>
            <person name="Oyama R."/>
            <person name="Ravasi T."/>
            <person name="Lenhard B."/>
            <person name="Wells C."/>
            <person name="Kodzius R."/>
            <person name="Shimokawa K."/>
            <person name="Bajic V.B."/>
            <person name="Brenner S.E."/>
            <person name="Batalov S."/>
            <person name="Forrest A.R."/>
            <person name="Zavolan M."/>
            <person name="Davis M.J."/>
            <person name="Wilming L.G."/>
            <person name="Aidinis V."/>
            <person name="Allen J.E."/>
            <person name="Ambesi-Impiombato A."/>
            <person name="Apweiler R."/>
            <person name="Aturaliya R.N."/>
            <person name="Bailey T.L."/>
            <person name="Bansal M."/>
            <person name="Baxter L."/>
            <person name="Beisel K.W."/>
            <person name="Bersano T."/>
            <person name="Bono H."/>
            <person name="Chalk A.M."/>
            <person name="Chiu K.P."/>
            <person name="Choudhary V."/>
            <person name="Christoffels A."/>
            <person name="Clutterbuck D.R."/>
            <person name="Crowe M.L."/>
            <person name="Dalla E."/>
            <person name="Dalrymple B.P."/>
            <person name="de Bono B."/>
            <person name="Della Gatta G."/>
            <person name="di Bernardo D."/>
            <person name="Down T."/>
            <person name="Engstrom P."/>
            <person name="Fagiolini M."/>
            <person name="Faulkner G."/>
            <person name="Fletcher C.F."/>
            <person name="Fukushima T."/>
            <person name="Furuno M."/>
            <person name="Futaki S."/>
            <person name="Gariboldi M."/>
            <person name="Georgii-Hemming P."/>
            <person name="Gingeras T.R."/>
            <person name="Gojobori T."/>
            <person name="Green R.E."/>
            <person name="Gustincich S."/>
            <person name="Harbers M."/>
            <person name="Hayashi Y."/>
            <person name="Hensch T.K."/>
            <person name="Hirokawa N."/>
            <person name="Hill D."/>
            <person name="Huminiecki L."/>
            <person name="Iacono M."/>
            <person name="Ikeo K."/>
            <person name="Iwama A."/>
            <person name="Ishikawa T."/>
            <person name="Jakt M."/>
            <person name="Kanapin A."/>
            <person name="Katoh M."/>
            <person name="Kawasawa Y."/>
            <person name="Kelso J."/>
            <person name="Kitamura H."/>
            <person name="Kitano H."/>
            <person name="Kollias G."/>
            <person name="Krishnan S.P."/>
            <person name="Kruger A."/>
            <person name="Kummerfeld S.K."/>
            <person name="Kurochkin I.V."/>
            <person name="Lareau L.F."/>
            <person name="Lazarevic D."/>
            <person name="Lipovich L."/>
            <person name="Liu J."/>
            <person name="Liuni S."/>
            <person name="McWilliam S."/>
            <person name="Madan Babu M."/>
            <person name="Madera M."/>
            <person name="Marchionni L."/>
            <person name="Matsuda H."/>
            <person name="Matsuzawa S."/>
            <person name="Miki H."/>
            <person name="Mignone F."/>
            <person name="Miyake S."/>
            <person name="Morris K."/>
            <person name="Mottagui-Tabar S."/>
            <person name="Mulder N."/>
            <person name="Nakano N."/>
            <person name="Nakauchi H."/>
            <person name="Ng P."/>
            <person name="Nilsson R."/>
            <person name="Nishiguchi S."/>
            <person name="Nishikawa S."/>
            <person name="Nori F."/>
            <person name="Ohara O."/>
            <person name="Okazaki Y."/>
            <person name="Orlando V."/>
            <person name="Pang K.C."/>
            <person name="Pavan W.J."/>
            <person name="Pavesi G."/>
            <person name="Pesole G."/>
            <person name="Petrovsky N."/>
            <person name="Piazza S."/>
            <person name="Reed J."/>
            <person name="Reid J.F."/>
            <person name="Ring B.Z."/>
            <person name="Ringwald M."/>
            <person name="Rost B."/>
            <person name="Ruan Y."/>
            <person name="Salzberg S.L."/>
            <person name="Sandelin A."/>
            <person name="Schneider C."/>
            <person name="Schoenbach C."/>
            <person name="Sekiguchi K."/>
            <person name="Semple C.A."/>
            <person name="Seno S."/>
            <person name="Sessa L."/>
            <person name="Sheng Y."/>
            <person name="Shibata Y."/>
            <person name="Shimada H."/>
            <person name="Shimada K."/>
            <person name="Silva D."/>
            <person name="Sinclair B."/>
            <person name="Sperling S."/>
            <person name="Stupka E."/>
            <person name="Sugiura K."/>
            <person name="Sultana R."/>
            <person name="Takenaka Y."/>
            <person name="Taki K."/>
            <person name="Tammoja K."/>
            <person name="Tan S.L."/>
            <person name="Tang S."/>
            <person name="Taylor M.S."/>
            <person name="Tegner J."/>
            <person name="Teichmann S.A."/>
            <person name="Ueda H.R."/>
            <person name="van Nimwegen E."/>
            <person name="Verardo R."/>
            <person name="Wei C.L."/>
            <person name="Yagi K."/>
            <person name="Yamanishi H."/>
            <person name="Zabarovsky E."/>
            <person name="Zhu S."/>
            <person name="Zimmer A."/>
            <person name="Hide W."/>
            <person name="Bult C."/>
            <person name="Grimmond S.M."/>
            <person name="Teasdale R.D."/>
            <person name="Liu E.T."/>
            <person name="Brusic V."/>
            <person name="Quackenbush J."/>
            <person name="Wahlestedt C."/>
            <person name="Mattick J.S."/>
            <person name="Hume D.A."/>
            <person name="Kai C."/>
            <person name="Sasaki D."/>
            <person name="Tomaru Y."/>
            <person name="Fukuda S."/>
            <person name="Kanamori-Katayama M."/>
            <person name="Suzuki M."/>
            <person name="Aoki J."/>
            <person name="Arakawa T."/>
            <person name="Iida J."/>
            <person name="Imamura K."/>
            <person name="Itoh M."/>
            <person name="Kato T."/>
            <person name="Kawaji H."/>
            <person name="Kawagashira N."/>
            <person name="Kawashima T."/>
            <person name="Kojima M."/>
            <person name="Kondo S."/>
            <person name="Konno H."/>
            <person name="Nakano K."/>
            <person name="Ninomiya N."/>
            <person name="Nishio T."/>
            <person name="Okada M."/>
            <person name="Plessy C."/>
            <person name="Shibata K."/>
            <person name="Shiraki T."/>
            <person name="Suzuki S."/>
            <person name="Tagami M."/>
            <person name="Waki K."/>
            <person name="Watahiki A."/>
            <person name="Okamura-Oho Y."/>
            <person name="Suzuki H."/>
            <person name="Kawai J."/>
            <person name="Hayashizaki Y."/>
        </authorList>
    </citation>
    <scope>NUCLEOTIDE SEQUENCE [LARGE SCALE MRNA]</scope>
    <source>
        <strain>C57BL/6J</strain>
        <tissue>Macrophage</tissue>
    </source>
</reference>
<reference key="6">
    <citation type="journal article" date="1990" name="J. Exp. Med.">
        <title>DNA rearrangement and constitutive expression of the interleukin 6 gene in a mouse plasmacytoma.</title>
        <authorList>
            <person name="Blankenstein T."/>
            <person name="Qin Z."/>
            <person name="Li W."/>
            <person name="Diamantstein T."/>
        </authorList>
    </citation>
    <scope>NUCLEOTIDE SEQUENCE [GENOMIC DNA] OF 1-6</scope>
    <source>
        <strain>BALB/cJ</strain>
    </source>
</reference>
<reference key="7">
    <citation type="journal article" date="1989" name="J. Immunol.">
        <title>The murine Il-6 gene maps to the proximal region of chromosome 5.</title>
        <authorList>
            <person name="Mock B.A."/>
            <person name="Nordan R.P."/>
            <person name="Justice M.J."/>
            <person name="Kozak C."/>
            <person name="Jenkins N.A."/>
            <person name="Copeland N.G."/>
            <person name="Clark S.C."/>
            <person name="Wong G.G."/>
            <person name="Rudikoff S."/>
        </authorList>
    </citation>
    <scope>NUCLEOTIDE SEQUENCE [GENOMIC DNA] OF 5-211</scope>
    <source>
        <strain>C57BL/6J</strain>
    </source>
</reference>
<reference key="8">
    <citation type="journal article" date="1986" name="Proc. Natl. Acad. Sci. U.S.A.">
        <title>Purification and NH2-terminal amino acid sequence of a T-cell-derived lymphokine with growth factor activity for B-cell hybridomas.</title>
        <authorList>
            <person name="van Snick J."/>
            <person name="Cayphas S."/>
            <person name="Vink A."/>
            <person name="Uyttenhove C."/>
            <person name="Coulie P.G."/>
            <person name="Rubira M.R."/>
            <person name="Simpson R.J."/>
        </authorList>
    </citation>
    <scope>PROTEIN SEQUENCE OF 25-45</scope>
</reference>
<reference key="9">
    <citation type="journal article" date="1988" name="Eur. J. Biochem.">
        <title>Murine hybridoma/plasmacytoma growth factor. Complete amino-acid sequence and relation to human interleukin-6.</title>
        <authorList>
            <person name="Simpson R.J."/>
            <person name="Moritz R.L."/>
            <person name="Rubira M.R."/>
            <person name="van Snick J."/>
        </authorList>
    </citation>
    <scope>PROTEIN SEQUENCE OF 25-211</scope>
</reference>
<reference key="10">
    <citation type="journal article" date="1990" name="Biochem. Biophys. Res. Commun.">
        <title>Internal amino acid sequencing of proteins by in situ cyanogen bromide cleavage in polyacrylamide gels.</title>
        <authorList>
            <person name="Jahnen W."/>
            <person name="Ward L.D."/>
            <person name="Reid G.E."/>
            <person name="Moritz R.L."/>
            <person name="Simpson R.J."/>
        </authorList>
    </citation>
    <scope>PROTEIN SEQUENCE OF 66-75; 78-84 AND 128-148</scope>
</reference>
<reference key="11">
    <citation type="journal article" date="1988" name="Biochem. Biophys. Res. Commun.">
        <title>Characterization of a recombinant murine interleukin-6: assignment of disulphide bonds.</title>
        <authorList>
            <person name="Simpson R.J."/>
            <person name="Moritz R.L."/>
            <person name="van Roost E."/>
            <person name="van Snick J."/>
        </authorList>
    </citation>
    <scope>DISULFIDE BONDS</scope>
</reference>
<reference key="12">
    <citation type="journal article" date="1996" name="Science">
        <title>Liver failure and defective hepatocyte regeneration in interleukin-6-deficient mice.</title>
        <authorList>
            <person name="Cressman D.E."/>
            <person name="Greenbaum L.E."/>
            <person name="DeAngelis R.A."/>
            <person name="Ciliberto G."/>
            <person name="Furth E.E."/>
            <person name="Poli V."/>
            <person name="Taub R."/>
        </authorList>
    </citation>
    <scope>FUNCTION</scope>
    <scope>DISRUPTION PHENOTYPE</scope>
</reference>
<reference key="13">
    <citation type="journal article" date="2000" name="Gastroenterology">
        <title>Combined interleukin 6 and soluble interleukin 6 receptor accelerates murine liver regeneration.</title>
        <authorList>
            <person name="Peters M."/>
            <person name="Blinn G."/>
            <person name="Jostock T."/>
            <person name="Schirmacher P."/>
            <person name="Meyer zum Bueschenfelde K.H."/>
            <person name="Galle P.R."/>
            <person name="Rose-John S."/>
        </authorList>
    </citation>
    <scope>FUNCTION</scope>
</reference>
<reference key="14">
    <citation type="journal article" date="2002" name="Nat. Med.">
        <title>Interleukin-6-deficient mice develop mature-onset obesity.</title>
        <authorList>
            <person name="Wallenius V."/>
            <person name="Wallenius K."/>
            <person name="Ahren B."/>
            <person name="Rudling M."/>
            <person name="Carlsten H."/>
            <person name="Dickson S.L."/>
            <person name="Ohlsson C."/>
            <person name="Jansson J.O."/>
        </authorList>
    </citation>
    <scope>FUNCTION</scope>
    <scope>DISRUPTION PHENOTYPE</scope>
</reference>
<reference key="15">
    <citation type="journal article" date="2004" name="J. Clin. Invest.">
        <title>IL-6 mediates hypoferremia of inflammation by inducing the synthesis of the iron regulatory hormone hepcidin.</title>
        <authorList>
            <person name="Nemeth E."/>
            <person name="Rivera S."/>
            <person name="Gabayan V."/>
            <person name="Keller C."/>
            <person name="Taudorf S."/>
            <person name="Pedersen B.K."/>
            <person name="Ganz T."/>
        </authorList>
    </citation>
    <scope>FUNCTION</scope>
</reference>
<reference key="16">
    <citation type="journal article" date="2006" name="Arthritis Rheum.">
        <title>Impaired skeletal development in interleukin-6-transgenic mice: a model for the impact of chronic inflammation on the growing skeletal system.</title>
        <authorList>
            <person name="De Benedetti F."/>
            <person name="Rucci N."/>
            <person name="Del Fattore A."/>
            <person name="Peruzzi B."/>
            <person name="Paro R."/>
            <person name="Longo M."/>
            <person name="Vivarelli M."/>
            <person name="Muratori F."/>
            <person name="Berni S."/>
            <person name="Ballanti P."/>
            <person name="Ferrari S."/>
            <person name="Teti A."/>
        </authorList>
    </citation>
    <scope>FUNCTION</scope>
</reference>
<reference key="17">
    <citation type="journal article" date="2006" name="Cell">
        <title>The orphan nuclear receptor RORgammat directs the differentiation program of proinflammatory IL-17+ T helper cells.</title>
        <authorList>
            <person name="Ivanov I.I."/>
            <person name="McKenzie B.S."/>
            <person name="Zhou L."/>
            <person name="Tadokoro C.E."/>
            <person name="Lepelley A."/>
            <person name="Lafaille J.J."/>
            <person name="Cua D.J."/>
            <person name="Littman D.R."/>
        </authorList>
    </citation>
    <scope>FUNCTION IN TH17 DIFFERENTIATION</scope>
    <scope>DISRUPTION PHENOTYPE</scope>
</reference>
<reference key="18">
    <citation type="journal article" date="2011" name="Nat. Med.">
        <title>Interleukin-6 enhances insulin secretion by increasing glucagon-like peptide-1 secretion from L cells and alpha cells.</title>
        <authorList>
            <person name="Ellingsgaard H."/>
            <person name="Hauselmann I."/>
            <person name="Schuler B."/>
            <person name="Habib A.M."/>
            <person name="Baggio L.L."/>
            <person name="Meier D.T."/>
            <person name="Eppler E."/>
            <person name="Bouzakri K."/>
            <person name="Wueest S."/>
            <person name="Muller Y.D."/>
            <person name="Hansen A.M."/>
            <person name="Reinecke M."/>
            <person name="Konrad D."/>
            <person name="Gassmann M."/>
            <person name="Reimann F."/>
            <person name="Halban P.A."/>
            <person name="Gromada J."/>
            <person name="Drucker D.J."/>
            <person name="Gribble F.M."/>
            <person name="Ehses J.A."/>
            <person name="Donath M.Y."/>
        </authorList>
    </citation>
    <scope>FUNCTION</scope>
    <scope>INDUCTION BY EXERCISE</scope>
</reference>
<reference key="19">
    <citation type="journal article" date="2012" name="J. Exp. Med.">
        <title>B and T cells collaborate in antiviral responses via IL-6, IL-21, and transcriptional activator and coactivator, Oct2 and OBF-1.</title>
        <authorList>
            <person name="Karnowski A."/>
            <person name="Chevrier S."/>
            <person name="Belz G.T."/>
            <person name="Mount A."/>
            <person name="Emslie D."/>
            <person name="D'Costa K."/>
            <person name="Tarlinton D.M."/>
            <person name="Kallies A."/>
            <person name="Corcoran L.M."/>
        </authorList>
    </citation>
    <scope>FUNCTION</scope>
    <scope>DISRUPTION PHENOTYPE</scope>
    <scope>TISSUE SPECIFICITY</scope>
    <scope>INDUCTION BY VIRAL INFECTION</scope>
</reference>
<reference key="20">
    <citation type="journal article" date="2017" name="Cell Rep.">
        <title>IL-6 Improves Energy and Glucose Homeostasis in Obesity via Enhanced Central IL-6 trans-Signaling.</title>
        <authorList>
            <person name="Timper K."/>
            <person name="Denson J.L."/>
            <person name="Steculorum S.M."/>
            <person name="Heilinger C."/>
            <person name="Engstroem-Ruud L."/>
            <person name="Wunderlich C.M."/>
            <person name="Rose-John S."/>
            <person name="Wunderlich F.T."/>
            <person name="Bruening J.C."/>
        </authorList>
    </citation>
    <scope>FUNCTION</scope>
    <scope>TISSUE SPECIFICITY</scope>
</reference>
<reference key="21">
    <citation type="journal article" date="2017" name="Mol. Cell. Biol.">
        <title>SorLA in Interleukin-6 Signaling and Turnover.</title>
        <authorList>
            <person name="Larsen J.V."/>
            <person name="Petersen C.M."/>
        </authorList>
    </citation>
    <scope>INTERACTION WITH SORL1</scope>
</reference>
<reference key="22">
    <citation type="journal article" date="2017" name="Nat. Immunol.">
        <title>Trans-presentation of IL-6 by dendritic cells is required for the priming of pathogenic TH17 cells.</title>
        <authorList>
            <person name="Heink S."/>
            <person name="Yogev N."/>
            <person name="Garbers C."/>
            <person name="Herwerth M."/>
            <person name="Aly L."/>
            <person name="Gasperi C."/>
            <person name="Husterer V."/>
            <person name="Croxford A.L."/>
            <person name="Moeller-Hackbarth K."/>
            <person name="Bartsch H.S."/>
            <person name="Sotlar K."/>
            <person name="Krebs S."/>
            <person name="Regen T."/>
            <person name="Blum H."/>
            <person name="Hemmer B."/>
            <person name="Misgeld T."/>
            <person name="Wunderlich T.F."/>
            <person name="Hidalgo J."/>
            <person name="Oukka M."/>
            <person name="Rose-John S."/>
            <person name="Schmidt-Supprian M."/>
            <person name="Waisman A."/>
            <person name="Korn T."/>
        </authorList>
    </citation>
    <scope>FUNCTION</scope>
    <scope>TISSUE SPECIFICITY</scope>
</reference>
<reference key="23">
    <citation type="journal article" date="2019" name="Immunity">
        <title>Targeting Interleukin-6 Signaling in Clinic.</title>
        <authorList>
            <person name="Kang S."/>
            <person name="Tanaka T."/>
            <person name="Narazaki M."/>
            <person name="Kishimoto T."/>
        </authorList>
    </citation>
    <scope>REVIEW ON FUNCTION</scope>
</reference>
<gene>
    <name evidence="18" type="primary">Il6</name>
    <name type="synonym">Il-6</name>
</gene>
<evidence type="ECO:0000250" key="1">
    <source>
        <dbReference type="UniProtKB" id="P05231"/>
    </source>
</evidence>
<evidence type="ECO:0000269" key="2">
    <source>
    </source>
</evidence>
<evidence type="ECO:0000269" key="3">
    <source>
    </source>
</evidence>
<evidence type="ECO:0000269" key="4">
    <source>
    </source>
</evidence>
<evidence type="ECO:0000269" key="5">
    <source>
    </source>
</evidence>
<evidence type="ECO:0000269" key="6">
    <source>
    </source>
</evidence>
<evidence type="ECO:0000269" key="7">
    <source>
    </source>
</evidence>
<evidence type="ECO:0000269" key="8">
    <source>
    </source>
</evidence>
<evidence type="ECO:0000269" key="9">
    <source>
    </source>
</evidence>
<evidence type="ECO:0000269" key="10">
    <source>
    </source>
</evidence>
<evidence type="ECO:0000269" key="11">
    <source>
    </source>
</evidence>
<evidence type="ECO:0000269" key="12">
    <source>
    </source>
</evidence>
<evidence type="ECO:0000269" key="13">
    <source>
    </source>
</evidence>
<evidence type="ECO:0000269" key="14">
    <source>
    </source>
</evidence>
<evidence type="ECO:0000269" key="15">
    <source>
    </source>
</evidence>
<evidence type="ECO:0000305" key="16"/>
<evidence type="ECO:0000305" key="17">
    <source>
    </source>
</evidence>
<evidence type="ECO:0000312" key="18">
    <source>
        <dbReference type="MGI" id="MGI:96559"/>
    </source>
</evidence>
<evidence type="ECO:0007829" key="19">
    <source>
        <dbReference type="PDB" id="2L3Y"/>
    </source>
</evidence>
<organism>
    <name type="scientific">Mus musculus</name>
    <name type="common">Mouse</name>
    <dbReference type="NCBI Taxonomy" id="10090"/>
    <lineage>
        <taxon>Eukaryota</taxon>
        <taxon>Metazoa</taxon>
        <taxon>Chordata</taxon>
        <taxon>Craniata</taxon>
        <taxon>Vertebrata</taxon>
        <taxon>Euteleostomi</taxon>
        <taxon>Mammalia</taxon>
        <taxon>Eutheria</taxon>
        <taxon>Euarchontoglires</taxon>
        <taxon>Glires</taxon>
        <taxon>Rodentia</taxon>
        <taxon>Myomorpha</taxon>
        <taxon>Muroidea</taxon>
        <taxon>Muridae</taxon>
        <taxon>Murinae</taxon>
        <taxon>Mus</taxon>
        <taxon>Mus</taxon>
    </lineage>
</organism>